<reference key="1">
    <citation type="journal article" date="2002" name="Gene">
        <title>The arginine deiminase pathway in the wine lactic acid bacterium Lactobacillus hilgardii X1B: structural and functional study of the arcABC genes.</title>
        <authorList>
            <person name="Arena M.E."/>
            <person name="Manca de Nadra M.C."/>
            <person name="Munoz R."/>
        </authorList>
    </citation>
    <scope>NUCLEOTIDE SEQUENCE [GENOMIC DNA]</scope>
    <source>
        <strain>X(1)B</strain>
    </source>
</reference>
<comment type="catalytic activity">
    <reaction evidence="1">
        <text>L-arginine + H2O = L-citrulline + NH4(+)</text>
        <dbReference type="Rhea" id="RHEA:19597"/>
        <dbReference type="ChEBI" id="CHEBI:15377"/>
        <dbReference type="ChEBI" id="CHEBI:28938"/>
        <dbReference type="ChEBI" id="CHEBI:32682"/>
        <dbReference type="ChEBI" id="CHEBI:57743"/>
        <dbReference type="EC" id="3.5.3.6"/>
    </reaction>
</comment>
<comment type="pathway">
    <text evidence="1">Amino-acid degradation; L-arginine degradation via ADI pathway; carbamoyl phosphate from L-arginine: step 1/2.</text>
</comment>
<comment type="subcellular location">
    <subcellularLocation>
        <location evidence="1">Cytoplasm</location>
    </subcellularLocation>
</comment>
<comment type="similarity">
    <text evidence="1">Belongs to the arginine deiminase family.</text>
</comment>
<dbReference type="EC" id="3.5.3.6" evidence="1"/>
<dbReference type="EMBL" id="AJ421514">
    <property type="protein sequence ID" value="CAD13391.1"/>
    <property type="molecule type" value="Genomic_DNA"/>
</dbReference>
<dbReference type="SMR" id="Q8G999"/>
<dbReference type="UniPathway" id="UPA00254">
    <property type="reaction ID" value="UER00364"/>
</dbReference>
<dbReference type="GO" id="GO:0005737">
    <property type="term" value="C:cytoplasm"/>
    <property type="evidence" value="ECO:0007669"/>
    <property type="project" value="UniProtKB-SubCell"/>
</dbReference>
<dbReference type="GO" id="GO:0016990">
    <property type="term" value="F:arginine deiminase activity"/>
    <property type="evidence" value="ECO:0007669"/>
    <property type="project" value="UniProtKB-UniRule"/>
</dbReference>
<dbReference type="GO" id="GO:0019547">
    <property type="term" value="P:arginine catabolic process to ornithine"/>
    <property type="evidence" value="ECO:0007669"/>
    <property type="project" value="UniProtKB-UniRule"/>
</dbReference>
<dbReference type="GO" id="GO:0019546">
    <property type="term" value="P:arginine deiminase pathway"/>
    <property type="evidence" value="ECO:0007669"/>
    <property type="project" value="TreeGrafter"/>
</dbReference>
<dbReference type="Gene3D" id="1.10.3930.10">
    <property type="entry name" value="Arginine deiminase"/>
    <property type="match status" value="1"/>
</dbReference>
<dbReference type="Gene3D" id="3.75.10.10">
    <property type="entry name" value="L-arginine/glycine Amidinotransferase, Chain A"/>
    <property type="match status" value="1"/>
</dbReference>
<dbReference type="HAMAP" id="MF_00242">
    <property type="entry name" value="Arg_deiminase"/>
    <property type="match status" value="1"/>
</dbReference>
<dbReference type="InterPro" id="IPR003876">
    <property type="entry name" value="Arg_deiminase"/>
</dbReference>
<dbReference type="NCBIfam" id="TIGR01078">
    <property type="entry name" value="arcA"/>
    <property type="match status" value="1"/>
</dbReference>
<dbReference type="NCBIfam" id="NF002381">
    <property type="entry name" value="PRK01388.1"/>
    <property type="match status" value="1"/>
</dbReference>
<dbReference type="PANTHER" id="PTHR47271">
    <property type="entry name" value="ARGININE DEIMINASE"/>
    <property type="match status" value="1"/>
</dbReference>
<dbReference type="PANTHER" id="PTHR47271:SF2">
    <property type="entry name" value="ARGININE DEIMINASE"/>
    <property type="match status" value="1"/>
</dbReference>
<dbReference type="Pfam" id="PF02274">
    <property type="entry name" value="ADI"/>
    <property type="match status" value="1"/>
</dbReference>
<dbReference type="PIRSF" id="PIRSF006356">
    <property type="entry name" value="Arg_deiminase"/>
    <property type="match status" value="1"/>
</dbReference>
<dbReference type="PRINTS" id="PR01466">
    <property type="entry name" value="ARGDEIMINASE"/>
</dbReference>
<dbReference type="SUPFAM" id="SSF55909">
    <property type="entry name" value="Pentein"/>
    <property type="match status" value="1"/>
</dbReference>
<gene>
    <name evidence="1" type="primary">arcA</name>
</gene>
<name>ARCA_LENHI</name>
<feature type="chain" id="PRO_0000182212" description="Arginine deiminase">
    <location>
        <begin position="1"/>
        <end position="418"/>
    </location>
</feature>
<feature type="active site" description="Amidino-cysteine intermediate" evidence="1">
    <location>
        <position position="406"/>
    </location>
</feature>
<keyword id="KW-0056">Arginine metabolism</keyword>
<keyword id="KW-0963">Cytoplasm</keyword>
<keyword id="KW-0378">Hydrolase</keyword>
<evidence type="ECO:0000255" key="1">
    <source>
        <dbReference type="HAMAP-Rule" id="MF_00242"/>
    </source>
</evidence>
<organism>
    <name type="scientific">Lentilactobacillus hilgardii</name>
    <name type="common">Lactobacillus hilgardii</name>
    <dbReference type="NCBI Taxonomy" id="1588"/>
    <lineage>
        <taxon>Bacteria</taxon>
        <taxon>Bacillati</taxon>
        <taxon>Bacillota</taxon>
        <taxon>Bacilli</taxon>
        <taxon>Lactobacillales</taxon>
        <taxon>Lactobacillaceae</taxon>
        <taxon>Lentilactobacillus</taxon>
    </lineage>
</organism>
<proteinExistence type="inferred from homology"/>
<accession>Q8G999</accession>
<protein>
    <recommendedName>
        <fullName evidence="1">Arginine deiminase</fullName>
        <shortName evidence="1">ADI</shortName>
        <ecNumber evidence="1">3.5.3.6</ecNumber>
    </recommendedName>
    <alternativeName>
        <fullName evidence="1">Arginine dihydrolase</fullName>
        <shortName evidence="1">AD</shortName>
    </alternativeName>
</protein>
<sequence length="418" mass="47173">MEVTQMTSPIHNYSEIGKLKTVLLKRPGREIENFTPDMMPRLLFDDIPYLPIAQKEHDYFADTLRDNGVEVLYLEKLSAEALDAGGEEVRNHFLEQMLTESGYAAGSIHDALKEYLGSMNNQDMVVKIMEGVRKNELDFVPKDLVSCAENQDYEFYMDPMPNLYFTRDPSACIGDGLSINHMTFVARQRESLFNETIIKYHPRFANKGIHVWRDRNHTTRIEGGDELVLNNHVMAIGVSQRTSADAIQDIAKNLFKDGQYDTVIAIKIPHNHAMMHLDTVFTMINYDQFTVHPGILGKGGQIDTWTITPGKNEGELNLQHDTDLKKVLKTALNLDDLDLIPTGNGDPIIAGREQWNDGSNTLAIAPGVVVTYNRNYVSNELLRKHGLKVLEVISSELSRGRGGPRCMSCPIVREDLKK</sequence>